<accession>C3PBW0</accession>
<comment type="function">
    <text evidence="1">Catalyzes the phosphorylation of the hydroxyl group of 4-methyl-5-beta-hydroxyethylthiazole (THZ).</text>
</comment>
<comment type="catalytic activity">
    <reaction evidence="1">
        <text>5-(2-hydroxyethyl)-4-methylthiazole + ATP = 4-methyl-5-(2-phosphooxyethyl)-thiazole + ADP + H(+)</text>
        <dbReference type="Rhea" id="RHEA:24212"/>
        <dbReference type="ChEBI" id="CHEBI:15378"/>
        <dbReference type="ChEBI" id="CHEBI:17957"/>
        <dbReference type="ChEBI" id="CHEBI:30616"/>
        <dbReference type="ChEBI" id="CHEBI:58296"/>
        <dbReference type="ChEBI" id="CHEBI:456216"/>
        <dbReference type="EC" id="2.7.1.50"/>
    </reaction>
</comment>
<comment type="cofactor">
    <cofactor evidence="1">
        <name>Mg(2+)</name>
        <dbReference type="ChEBI" id="CHEBI:18420"/>
    </cofactor>
</comment>
<comment type="pathway">
    <text evidence="1">Cofactor biosynthesis; thiamine diphosphate biosynthesis; 4-methyl-5-(2-phosphoethyl)-thiazole from 5-(2-hydroxyethyl)-4-methylthiazole: step 1/1.</text>
</comment>
<comment type="similarity">
    <text evidence="1">Belongs to the Thz kinase family.</text>
</comment>
<sequence>MNTKEISKVVDLVRESNPLVHNITNVVVTNFTANGLLALGASPVMAYAKEEVAEMASIAGALVLNMGTLRPDEVEAMLLAGKSANRNDVPVLFDPVGAGATSYRTEVARHIPAEIELAIIRGNAAEIANVINEKWEIKGVDAGAGNGNVVSIAKQAADELNTVAVITGKEDVVTDGERTIVIRNGHSILTKITGTGCLLTSVIGAFVAVEKDYVKAAVAALTFYGVAAELAAAKTVEKGPGSFQIEFLNQLANTTSGDIEKYGKIEVI</sequence>
<name>THIM_BACAA</name>
<dbReference type="EC" id="2.7.1.50" evidence="1"/>
<dbReference type="EMBL" id="CP001598">
    <property type="protein sequence ID" value="ACQ50279.1"/>
    <property type="molecule type" value="Genomic_DNA"/>
</dbReference>
<dbReference type="RefSeq" id="WP_001092689.1">
    <property type="nucleotide sequence ID" value="NC_012659.1"/>
</dbReference>
<dbReference type="SMR" id="C3PBW0"/>
<dbReference type="GeneID" id="45020435"/>
<dbReference type="KEGG" id="bai:BAA_0439"/>
<dbReference type="HOGENOM" id="CLU_019943_0_1_9"/>
<dbReference type="UniPathway" id="UPA00060">
    <property type="reaction ID" value="UER00139"/>
</dbReference>
<dbReference type="GO" id="GO:0005524">
    <property type="term" value="F:ATP binding"/>
    <property type="evidence" value="ECO:0007669"/>
    <property type="project" value="UniProtKB-UniRule"/>
</dbReference>
<dbReference type="GO" id="GO:0004417">
    <property type="term" value="F:hydroxyethylthiazole kinase activity"/>
    <property type="evidence" value="ECO:0007669"/>
    <property type="project" value="UniProtKB-UniRule"/>
</dbReference>
<dbReference type="GO" id="GO:0000287">
    <property type="term" value="F:magnesium ion binding"/>
    <property type="evidence" value="ECO:0007669"/>
    <property type="project" value="UniProtKB-UniRule"/>
</dbReference>
<dbReference type="GO" id="GO:0009228">
    <property type="term" value="P:thiamine biosynthetic process"/>
    <property type="evidence" value="ECO:0007669"/>
    <property type="project" value="UniProtKB-KW"/>
</dbReference>
<dbReference type="GO" id="GO:0009229">
    <property type="term" value="P:thiamine diphosphate biosynthetic process"/>
    <property type="evidence" value="ECO:0007669"/>
    <property type="project" value="UniProtKB-UniRule"/>
</dbReference>
<dbReference type="CDD" id="cd01170">
    <property type="entry name" value="THZ_kinase"/>
    <property type="match status" value="1"/>
</dbReference>
<dbReference type="FunFam" id="3.40.1190.20:FF:000027">
    <property type="entry name" value="Hydroxyethylthiazole kinase"/>
    <property type="match status" value="1"/>
</dbReference>
<dbReference type="Gene3D" id="3.40.1190.20">
    <property type="match status" value="1"/>
</dbReference>
<dbReference type="HAMAP" id="MF_00228">
    <property type="entry name" value="Thz_kinase"/>
    <property type="match status" value="1"/>
</dbReference>
<dbReference type="InterPro" id="IPR000417">
    <property type="entry name" value="Hyethyz_kinase"/>
</dbReference>
<dbReference type="InterPro" id="IPR029056">
    <property type="entry name" value="Ribokinase-like"/>
</dbReference>
<dbReference type="NCBIfam" id="NF006830">
    <property type="entry name" value="PRK09355.1"/>
    <property type="match status" value="1"/>
</dbReference>
<dbReference type="NCBIfam" id="TIGR00694">
    <property type="entry name" value="thiM"/>
    <property type="match status" value="1"/>
</dbReference>
<dbReference type="Pfam" id="PF02110">
    <property type="entry name" value="HK"/>
    <property type="match status" value="1"/>
</dbReference>
<dbReference type="PIRSF" id="PIRSF000513">
    <property type="entry name" value="Thz_kinase"/>
    <property type="match status" value="1"/>
</dbReference>
<dbReference type="PRINTS" id="PR01099">
    <property type="entry name" value="HYETHTZKNASE"/>
</dbReference>
<dbReference type="SUPFAM" id="SSF53613">
    <property type="entry name" value="Ribokinase-like"/>
    <property type="match status" value="1"/>
</dbReference>
<feature type="chain" id="PRO_1000198102" description="Hydroxyethylthiazole kinase">
    <location>
        <begin position="1"/>
        <end position="268"/>
    </location>
</feature>
<feature type="binding site" evidence="1">
    <location>
        <position position="45"/>
    </location>
    <ligand>
        <name>substrate</name>
    </ligand>
</feature>
<feature type="binding site" evidence="1">
    <location>
        <position position="121"/>
    </location>
    <ligand>
        <name>ATP</name>
        <dbReference type="ChEBI" id="CHEBI:30616"/>
    </ligand>
</feature>
<feature type="binding site" evidence="1">
    <location>
        <position position="167"/>
    </location>
    <ligand>
        <name>ATP</name>
        <dbReference type="ChEBI" id="CHEBI:30616"/>
    </ligand>
</feature>
<feature type="binding site" evidence="1">
    <location>
        <position position="194"/>
    </location>
    <ligand>
        <name>substrate</name>
    </ligand>
</feature>
<evidence type="ECO:0000255" key="1">
    <source>
        <dbReference type="HAMAP-Rule" id="MF_00228"/>
    </source>
</evidence>
<organism>
    <name type="scientific">Bacillus anthracis (strain A0248)</name>
    <dbReference type="NCBI Taxonomy" id="592021"/>
    <lineage>
        <taxon>Bacteria</taxon>
        <taxon>Bacillati</taxon>
        <taxon>Bacillota</taxon>
        <taxon>Bacilli</taxon>
        <taxon>Bacillales</taxon>
        <taxon>Bacillaceae</taxon>
        <taxon>Bacillus</taxon>
        <taxon>Bacillus cereus group</taxon>
    </lineage>
</organism>
<protein>
    <recommendedName>
        <fullName evidence="1">Hydroxyethylthiazole kinase</fullName>
        <ecNumber evidence="1">2.7.1.50</ecNumber>
    </recommendedName>
    <alternativeName>
        <fullName evidence="1">4-methyl-5-beta-hydroxyethylthiazole kinase</fullName>
        <shortName evidence="1">TH kinase</shortName>
        <shortName evidence="1">Thz kinase</shortName>
    </alternativeName>
</protein>
<gene>
    <name evidence="1" type="primary">thiM</name>
    <name type="ordered locus">BAA_0439</name>
</gene>
<keyword id="KW-0067">ATP-binding</keyword>
<keyword id="KW-0418">Kinase</keyword>
<keyword id="KW-0460">Magnesium</keyword>
<keyword id="KW-0479">Metal-binding</keyword>
<keyword id="KW-0547">Nucleotide-binding</keyword>
<keyword id="KW-0784">Thiamine biosynthesis</keyword>
<keyword id="KW-0808">Transferase</keyword>
<reference key="1">
    <citation type="submission" date="2009-04" db="EMBL/GenBank/DDBJ databases">
        <title>Genome sequence of Bacillus anthracis A0248.</title>
        <authorList>
            <person name="Dodson R.J."/>
            <person name="Munk A.C."/>
            <person name="Bruce D."/>
            <person name="Detter C."/>
            <person name="Tapia R."/>
            <person name="Sutton G."/>
            <person name="Sims D."/>
            <person name="Brettin T."/>
        </authorList>
    </citation>
    <scope>NUCLEOTIDE SEQUENCE [LARGE SCALE GENOMIC DNA]</scope>
    <source>
        <strain>A0248</strain>
    </source>
</reference>
<proteinExistence type="inferred from homology"/>